<protein>
    <recommendedName>
        <fullName evidence="1">Small ribosomal subunit protein uS3</fullName>
    </recommendedName>
    <alternativeName>
        <fullName evidence="2">30S ribosomal protein S3</fullName>
    </alternativeName>
</protein>
<keyword id="KW-0687">Ribonucleoprotein</keyword>
<keyword id="KW-0689">Ribosomal protein</keyword>
<keyword id="KW-0694">RNA-binding</keyword>
<keyword id="KW-0699">rRNA-binding</keyword>
<organism>
    <name type="scientific">Lactobacillus johnsonii (strain CNCM I-12250 / La1 / NCC 533)</name>
    <dbReference type="NCBI Taxonomy" id="257314"/>
    <lineage>
        <taxon>Bacteria</taxon>
        <taxon>Bacillati</taxon>
        <taxon>Bacillota</taxon>
        <taxon>Bacilli</taxon>
        <taxon>Lactobacillales</taxon>
        <taxon>Lactobacillaceae</taxon>
        <taxon>Lactobacillus</taxon>
    </lineage>
</organism>
<proteinExistence type="inferred from homology"/>
<feature type="chain" id="PRO_0000130133" description="Small ribosomal subunit protein uS3">
    <location>
        <begin position="1"/>
        <end position="222"/>
    </location>
</feature>
<feature type="domain" description="KH type-2" evidence="1">
    <location>
        <begin position="38"/>
        <end position="106"/>
    </location>
</feature>
<comment type="function">
    <text evidence="1">Binds the lower part of the 30S subunit head. Binds mRNA in the 70S ribosome, positioning it for translation.</text>
</comment>
<comment type="subunit">
    <text evidence="1">Part of the 30S ribosomal subunit. Forms a tight complex with proteins S10 and S14.</text>
</comment>
<comment type="similarity">
    <text evidence="1">Belongs to the universal ribosomal protein uS3 family.</text>
</comment>
<evidence type="ECO:0000255" key="1">
    <source>
        <dbReference type="HAMAP-Rule" id="MF_01309"/>
    </source>
</evidence>
<evidence type="ECO:0000305" key="2"/>
<sequence length="222" mass="24763">MGQKINPNGFRLGVNRDWEAKWYADKNYADTLNEDLRIRKFISEKLADASVSTVEIERAANRINISIHTAKPGMVIGKGGKEVEALRKELSALTNKNVHINIVEIKKPDLDAKLVGEGIARQLEARIAFRRATRQATQRSMRSGAKGIKVQTAGRLNGADMARREWHTEGSVPLHTLRADIDYAWVEAATTYGQIGVKVWINRGEILPQRKNKPSKKAKGGN</sequence>
<reference key="1">
    <citation type="journal article" date="2004" name="Proc. Natl. Acad. Sci. U.S.A.">
        <title>The genome sequence of the probiotic intestinal bacterium Lactobacillus johnsonii NCC 533.</title>
        <authorList>
            <person name="Pridmore R.D."/>
            <person name="Berger B."/>
            <person name="Desiere F."/>
            <person name="Vilanova D."/>
            <person name="Barretto C."/>
            <person name="Pittet A.-C."/>
            <person name="Zwahlen M.-C."/>
            <person name="Rouvet M."/>
            <person name="Altermann E."/>
            <person name="Barrangou R."/>
            <person name="Mollet B."/>
            <person name="Mercenier A."/>
            <person name="Klaenhammer T."/>
            <person name="Arigoni F."/>
            <person name="Schell M.A."/>
        </authorList>
    </citation>
    <scope>NUCLEOTIDE SEQUENCE [LARGE SCALE GENOMIC DNA]</scope>
    <source>
        <strain>CNCM I-1225 / La1 / NCC 533</strain>
    </source>
</reference>
<accession>Q74L83</accession>
<dbReference type="EMBL" id="AE017198">
    <property type="protein sequence ID" value="AAS08331.1"/>
    <property type="molecule type" value="Genomic_DNA"/>
</dbReference>
<dbReference type="RefSeq" id="WP_011161521.1">
    <property type="nucleotide sequence ID" value="NC_005362.1"/>
</dbReference>
<dbReference type="SMR" id="Q74L83"/>
<dbReference type="GeneID" id="83569760"/>
<dbReference type="KEGG" id="ljo:LJ_0345"/>
<dbReference type="eggNOG" id="COG0092">
    <property type="taxonomic scope" value="Bacteria"/>
</dbReference>
<dbReference type="HOGENOM" id="CLU_058591_0_2_9"/>
<dbReference type="Proteomes" id="UP000000581">
    <property type="component" value="Chromosome"/>
</dbReference>
<dbReference type="GO" id="GO:0022627">
    <property type="term" value="C:cytosolic small ribosomal subunit"/>
    <property type="evidence" value="ECO:0007669"/>
    <property type="project" value="TreeGrafter"/>
</dbReference>
<dbReference type="GO" id="GO:0003729">
    <property type="term" value="F:mRNA binding"/>
    <property type="evidence" value="ECO:0007669"/>
    <property type="project" value="UniProtKB-UniRule"/>
</dbReference>
<dbReference type="GO" id="GO:0019843">
    <property type="term" value="F:rRNA binding"/>
    <property type="evidence" value="ECO:0007669"/>
    <property type="project" value="UniProtKB-UniRule"/>
</dbReference>
<dbReference type="GO" id="GO:0003735">
    <property type="term" value="F:structural constituent of ribosome"/>
    <property type="evidence" value="ECO:0007669"/>
    <property type="project" value="InterPro"/>
</dbReference>
<dbReference type="GO" id="GO:0006412">
    <property type="term" value="P:translation"/>
    <property type="evidence" value="ECO:0007669"/>
    <property type="project" value="UniProtKB-UniRule"/>
</dbReference>
<dbReference type="CDD" id="cd02412">
    <property type="entry name" value="KH-II_30S_S3"/>
    <property type="match status" value="1"/>
</dbReference>
<dbReference type="FunFam" id="3.30.300.20:FF:000001">
    <property type="entry name" value="30S ribosomal protein S3"/>
    <property type="match status" value="1"/>
</dbReference>
<dbReference type="Gene3D" id="3.30.300.20">
    <property type="match status" value="1"/>
</dbReference>
<dbReference type="Gene3D" id="3.30.1140.32">
    <property type="entry name" value="Ribosomal protein S3, C-terminal domain"/>
    <property type="match status" value="1"/>
</dbReference>
<dbReference type="HAMAP" id="MF_01309_B">
    <property type="entry name" value="Ribosomal_uS3_B"/>
    <property type="match status" value="1"/>
</dbReference>
<dbReference type="InterPro" id="IPR004087">
    <property type="entry name" value="KH_dom"/>
</dbReference>
<dbReference type="InterPro" id="IPR015946">
    <property type="entry name" value="KH_dom-like_a/b"/>
</dbReference>
<dbReference type="InterPro" id="IPR004044">
    <property type="entry name" value="KH_dom_type_2"/>
</dbReference>
<dbReference type="InterPro" id="IPR009019">
    <property type="entry name" value="KH_sf_prok-type"/>
</dbReference>
<dbReference type="InterPro" id="IPR036419">
    <property type="entry name" value="Ribosomal_S3_C_sf"/>
</dbReference>
<dbReference type="InterPro" id="IPR005704">
    <property type="entry name" value="Ribosomal_uS3_bac-typ"/>
</dbReference>
<dbReference type="InterPro" id="IPR001351">
    <property type="entry name" value="Ribosomal_uS3_C"/>
</dbReference>
<dbReference type="InterPro" id="IPR018280">
    <property type="entry name" value="Ribosomal_uS3_CS"/>
</dbReference>
<dbReference type="NCBIfam" id="TIGR01009">
    <property type="entry name" value="rpsC_bact"/>
    <property type="match status" value="1"/>
</dbReference>
<dbReference type="PANTHER" id="PTHR11760">
    <property type="entry name" value="30S/40S RIBOSOMAL PROTEIN S3"/>
    <property type="match status" value="1"/>
</dbReference>
<dbReference type="PANTHER" id="PTHR11760:SF19">
    <property type="entry name" value="SMALL RIBOSOMAL SUBUNIT PROTEIN US3C"/>
    <property type="match status" value="1"/>
</dbReference>
<dbReference type="Pfam" id="PF07650">
    <property type="entry name" value="KH_2"/>
    <property type="match status" value="1"/>
</dbReference>
<dbReference type="Pfam" id="PF00189">
    <property type="entry name" value="Ribosomal_S3_C"/>
    <property type="match status" value="1"/>
</dbReference>
<dbReference type="SMART" id="SM00322">
    <property type="entry name" value="KH"/>
    <property type="match status" value="1"/>
</dbReference>
<dbReference type="SUPFAM" id="SSF54814">
    <property type="entry name" value="Prokaryotic type KH domain (KH-domain type II)"/>
    <property type="match status" value="1"/>
</dbReference>
<dbReference type="SUPFAM" id="SSF54821">
    <property type="entry name" value="Ribosomal protein S3 C-terminal domain"/>
    <property type="match status" value="1"/>
</dbReference>
<dbReference type="PROSITE" id="PS50823">
    <property type="entry name" value="KH_TYPE_2"/>
    <property type="match status" value="1"/>
</dbReference>
<dbReference type="PROSITE" id="PS00548">
    <property type="entry name" value="RIBOSOMAL_S3"/>
    <property type="match status" value="1"/>
</dbReference>
<name>RS3_LACJO</name>
<gene>
    <name evidence="1" type="primary">rpsC</name>
    <name type="ordered locus">LJ_0345</name>
</gene>